<proteinExistence type="evidence at protein level"/>
<protein>
    <recommendedName>
        <fullName>Pleiotropic regulator 1</fullName>
    </recommendedName>
</protein>
<gene>
    <name type="primary">PLRG1</name>
</gene>
<comment type="function">
    <text evidence="2 3 7 8 12">Involved in pre-mRNA splicing as component of the spliceosome (PubMed:28076346, PubMed:28502770). Component of the PRP19-CDC5L complex that forms an integral part of the spliceosome and is required for activating pre-mRNA splicing (PubMed:11101529, PubMed:11544257). As a component of the minor spliceosome, involved in the splicing of U12-type introns in pre-mRNAs (Probable).</text>
</comment>
<comment type="subunit">
    <text evidence="2 3 4 5 6 7 8 9">Identified in the spliceosome C complex (PubMed:12176931, PubMed:28076346, PubMed:28502770). Component of the PRP19-CDC5L splicing complex composed of a core complex comprising a homotetramer of PRPF19, CDC5L, PLRG1 and BCAS2, and at least three less stably associated proteins CTNNBL1, CWC15 and HSPA8 (PubMed:11101529, PubMed:20176811). Interacts (via its WD40 repeat domain) directly with CDC5L (via its C-terminal); the interaction is required for mRNA splicing but not for spliceosome assembly (PubMed:11544257). Component of the minor spliceosome, which splices U12-type introns. Within this complex, interacts with CRIPT (PubMed:33509932). Also interacts directly in the complex with BCAS2 and PRPF19 (PubMed:20176811). Interacts with USB1 (PubMed:23022480).</text>
</comment>
<comment type="interaction">
    <interactant intactId="EBI-1051504">
        <id>O43660</id>
    </interactant>
    <interactant intactId="EBI-1050106">
        <id>O75934</id>
        <label>BCAS2</label>
    </interactant>
    <organismsDiffer>false</organismsDiffer>
    <experiments>4</experiments>
</comment>
<comment type="interaction">
    <interactant intactId="EBI-1051504">
        <id>O43660</id>
    </interactant>
    <interactant intactId="EBI-374880">
        <id>Q99459</id>
        <label>CDC5L</label>
    </interactant>
    <organismsDiffer>false</organismsDiffer>
    <experiments>10</experiments>
</comment>
<comment type="interaction">
    <interactant intactId="EBI-1051504">
        <id>O43660</id>
    </interactant>
    <interactant intactId="EBI-486809">
        <id>P52272</id>
        <label>HNRNPM</label>
    </interactant>
    <organismsDiffer>false</organismsDiffer>
    <experiments>5</experiments>
</comment>
<comment type="interaction">
    <interactant intactId="EBI-1051504">
        <id>O43660</id>
    </interactant>
    <interactant intactId="EBI-395746">
        <id>Q9UMS4</id>
        <label>PRPF19</label>
    </interactant>
    <organismsDiffer>false</organismsDiffer>
    <experiments>4</experiments>
</comment>
<comment type="interaction">
    <interactant intactId="EBI-1051504">
        <id>O43660</id>
    </interactant>
    <interactant intactId="EBI-2462271">
        <id>Q15428</id>
        <label>SF3A2</label>
    </interactant>
    <organismsDiffer>false</organismsDiffer>
    <experiments>2</experiments>
</comment>
<comment type="interaction">
    <interactant intactId="EBI-11743883">
        <id>O43660-2</id>
    </interactant>
    <interactant intactId="EBI-930964">
        <id>P54253</id>
        <label>ATXN1</label>
    </interactant>
    <organismsDiffer>false</organismsDiffer>
    <experiments>3</experiments>
</comment>
<comment type="subcellular location">
    <subcellularLocation>
        <location evidence="2 5 7 8">Nucleus</location>
    </subcellularLocation>
    <subcellularLocation>
        <location evidence="3">Nucleus speckle</location>
    </subcellularLocation>
</comment>
<comment type="alternative products">
    <event type="alternative splicing"/>
    <isoform>
        <id>O43660-1</id>
        <name>1</name>
        <sequence type="displayed"/>
    </isoform>
    <isoform>
        <id>O43660-2</id>
        <name>2</name>
        <sequence type="described" ref="VSP_008804"/>
    </isoform>
</comment>
<comment type="miscellaneous">
    <molecule>Isoform 2</molecule>
    <text evidence="11">May be due to a competing donor splice site.</text>
</comment>
<comment type="similarity">
    <text evidence="11">Belongs to the WD repeat PRL1/PRL2 family.</text>
</comment>
<sequence length="514" mass="57194">MVEEVQKHSVHTLVFRSLKRTHDMFVADNGKPVPLDEESHKRKMAIKLRNEYGPVLHMPTSKENLKEKGPQNATDSYVHKQYPANQGQEVEYFVAGTHPYPPGPGVALTADTKIQRMPSESAAQSLAVALPLQTKADANRTAPSGSEYRHPGASDRPQPTAMNSIVMETGNTKNSALMAKKAPTMPKPQWHPPWKLYRVISGHLGWVRCIAVEPGNQWFVTGSADRTIKIWDLASGKLKLSLTGHISTVRGVIVSTRSPYLFSCGEDKQVKCWDLEYNKVIRHYHGHLSAVYGLDLHPTIDVLVTCSRDSTARIWDVRTKASVHTLSGHTNAVATVRCQAAEPQIITGSHDTTIRLWDLVAGKTRVTLTNHKKSVRAVVLHPRHYTFASGSPDNIKQWKFPDGSFIQNLSGHNAIINTLTVNSDGVLVSGADNGTMHLWDWRTGYNFQRVHAAVQPGSLDSESGIFACAFDQSESRLLTAEADKTIKVYREDDTATEETHPVSWKPEIIKRKRF</sequence>
<keyword id="KW-0002">3D-structure</keyword>
<keyword id="KW-0007">Acetylation</keyword>
<keyword id="KW-0025">Alternative splicing</keyword>
<keyword id="KW-0903">Direct protein sequencing</keyword>
<keyword id="KW-0507">mRNA processing</keyword>
<keyword id="KW-0508">mRNA splicing</keyword>
<keyword id="KW-0539">Nucleus</keyword>
<keyword id="KW-0597">Phosphoprotein</keyword>
<keyword id="KW-1267">Proteomics identification</keyword>
<keyword id="KW-1185">Reference proteome</keyword>
<keyword id="KW-0677">Repeat</keyword>
<keyword id="KW-0747">Spliceosome</keyword>
<keyword id="KW-0853">WD repeat</keyword>
<evidence type="ECO:0000256" key="1">
    <source>
        <dbReference type="SAM" id="MobiDB-lite"/>
    </source>
</evidence>
<evidence type="ECO:0000269" key="2">
    <source>
    </source>
</evidence>
<evidence type="ECO:0000269" key="3">
    <source>
    </source>
</evidence>
<evidence type="ECO:0000269" key="4">
    <source>
    </source>
</evidence>
<evidence type="ECO:0000269" key="5">
    <source>
    </source>
</evidence>
<evidence type="ECO:0000269" key="6">
    <source>
    </source>
</evidence>
<evidence type="ECO:0000269" key="7">
    <source>
    </source>
</evidence>
<evidence type="ECO:0000269" key="8">
    <source>
    </source>
</evidence>
<evidence type="ECO:0000269" key="9">
    <source>
    </source>
</evidence>
<evidence type="ECO:0000303" key="10">
    <source>
    </source>
</evidence>
<evidence type="ECO:0000305" key="11"/>
<evidence type="ECO:0000305" key="12">
    <source>
    </source>
</evidence>
<evidence type="ECO:0007744" key="13">
    <source>
        <dbReference type="PDB" id="4YVD"/>
    </source>
</evidence>
<evidence type="ECO:0007744" key="14">
    <source>
        <dbReference type="PDB" id="5MQF"/>
    </source>
</evidence>
<evidence type="ECO:0007744" key="15">
    <source>
        <dbReference type="PDB" id="5XJC"/>
    </source>
</evidence>
<evidence type="ECO:0007744" key="16">
    <source>
        <dbReference type="PDB" id="7DVQ"/>
    </source>
</evidence>
<evidence type="ECO:0007744" key="17">
    <source>
    </source>
</evidence>
<evidence type="ECO:0007744" key="18">
    <source>
    </source>
</evidence>
<evidence type="ECO:0007829" key="19">
    <source>
        <dbReference type="PDB" id="4YVD"/>
    </source>
</evidence>
<evidence type="ECO:0007829" key="20">
    <source>
        <dbReference type="PDB" id="6FF4"/>
    </source>
</evidence>
<evidence type="ECO:0007829" key="21">
    <source>
        <dbReference type="PDB" id="6ICZ"/>
    </source>
</evidence>
<evidence type="ECO:0007829" key="22">
    <source>
        <dbReference type="PDB" id="6ID0"/>
    </source>
</evidence>
<evidence type="ECO:0007829" key="23">
    <source>
        <dbReference type="PDB" id="6ID1"/>
    </source>
</evidence>
<evidence type="ECO:0007829" key="24">
    <source>
        <dbReference type="PDB" id="7DVQ"/>
    </source>
</evidence>
<feature type="chain" id="PRO_0000051133" description="Pleiotropic regulator 1">
    <location>
        <begin position="1"/>
        <end position="514"/>
    </location>
</feature>
<feature type="repeat" description="WD 1">
    <location>
        <begin position="202"/>
        <end position="241"/>
    </location>
</feature>
<feature type="repeat" description="WD 2">
    <location>
        <begin position="244"/>
        <end position="283"/>
    </location>
</feature>
<feature type="repeat" description="WD 3">
    <location>
        <begin position="286"/>
        <end position="325"/>
    </location>
</feature>
<feature type="repeat" description="WD 4">
    <location>
        <begin position="328"/>
        <end position="367"/>
    </location>
</feature>
<feature type="repeat" description="WD 5">
    <location>
        <begin position="370"/>
        <end position="410"/>
    </location>
</feature>
<feature type="repeat" description="WD 6">
    <location>
        <begin position="411"/>
        <end position="449"/>
    </location>
</feature>
<feature type="repeat" description="WD 7">
    <location>
        <begin position="460"/>
        <end position="499"/>
    </location>
</feature>
<feature type="region of interest" description="Disordered" evidence="1">
    <location>
        <begin position="135"/>
        <end position="160"/>
    </location>
</feature>
<feature type="modified residue" description="N-acetylmethionine" evidence="17">
    <location>
        <position position="1"/>
    </location>
</feature>
<feature type="modified residue" description="Phosphoserine" evidence="18">
    <location>
        <position position="119"/>
    </location>
</feature>
<feature type="modified residue" description="Phosphoserine" evidence="18">
    <location>
        <position position="201"/>
    </location>
</feature>
<feature type="modified residue" description="Phosphoserine" evidence="18">
    <location>
        <position position="391"/>
    </location>
</feature>
<feature type="splice variant" id="VSP_008804" description="In isoform 2." evidence="10">
    <location>
        <begin position="96"/>
        <end position="104"/>
    </location>
</feature>
<feature type="strand" evidence="19">
    <location>
        <begin position="194"/>
        <end position="200"/>
    </location>
</feature>
<feature type="strand" evidence="19">
    <location>
        <begin position="207"/>
        <end position="212"/>
    </location>
</feature>
<feature type="strand" evidence="19">
    <location>
        <begin position="216"/>
        <end position="223"/>
    </location>
</feature>
<feature type="strand" evidence="19">
    <location>
        <begin position="228"/>
        <end position="232"/>
    </location>
</feature>
<feature type="turn" evidence="19">
    <location>
        <begin position="233"/>
        <end position="235"/>
    </location>
</feature>
<feature type="strand" evidence="19">
    <location>
        <begin position="238"/>
        <end position="242"/>
    </location>
</feature>
<feature type="strand" evidence="19">
    <location>
        <begin position="249"/>
        <end position="254"/>
    </location>
</feature>
<feature type="strand" evidence="19">
    <location>
        <begin position="256"/>
        <end position="265"/>
    </location>
</feature>
<feature type="strand" evidence="19">
    <location>
        <begin position="270"/>
        <end position="274"/>
    </location>
</feature>
<feature type="turn" evidence="19">
    <location>
        <begin position="275"/>
        <end position="278"/>
    </location>
</feature>
<feature type="strand" evidence="19">
    <location>
        <begin position="279"/>
        <end position="283"/>
    </location>
</feature>
<feature type="strand" evidence="19">
    <location>
        <begin position="291"/>
        <end position="296"/>
    </location>
</feature>
<feature type="strand" evidence="19">
    <location>
        <begin position="298"/>
        <end position="307"/>
    </location>
</feature>
<feature type="strand" evidence="19">
    <location>
        <begin position="310"/>
        <end position="316"/>
    </location>
</feature>
<feature type="turn" evidence="19">
    <location>
        <begin position="317"/>
        <end position="319"/>
    </location>
</feature>
<feature type="strand" evidence="19">
    <location>
        <begin position="322"/>
        <end position="327"/>
    </location>
</feature>
<feature type="strand" evidence="19">
    <location>
        <begin position="333"/>
        <end position="338"/>
    </location>
</feature>
<feature type="strand" evidence="19">
    <location>
        <begin position="340"/>
        <end position="343"/>
    </location>
</feature>
<feature type="strand" evidence="19">
    <location>
        <begin position="345"/>
        <end position="349"/>
    </location>
</feature>
<feature type="strand" evidence="19">
    <location>
        <begin position="354"/>
        <end position="358"/>
    </location>
</feature>
<feature type="turn" evidence="19">
    <location>
        <begin position="359"/>
        <end position="362"/>
    </location>
</feature>
<feature type="strand" evidence="19">
    <location>
        <begin position="363"/>
        <end position="368"/>
    </location>
</feature>
<feature type="strand" evidence="19">
    <location>
        <begin position="377"/>
        <end position="380"/>
    </location>
</feature>
<feature type="strand" evidence="19">
    <location>
        <begin position="384"/>
        <end position="390"/>
    </location>
</feature>
<feature type="strand" evidence="19">
    <location>
        <begin position="395"/>
        <end position="399"/>
    </location>
</feature>
<feature type="turn" evidence="19">
    <location>
        <begin position="400"/>
        <end position="403"/>
    </location>
</feature>
<feature type="strand" evidence="19">
    <location>
        <begin position="404"/>
        <end position="409"/>
    </location>
</feature>
<feature type="strand" evidence="19">
    <location>
        <begin position="416"/>
        <end position="421"/>
    </location>
</feature>
<feature type="turn" evidence="22">
    <location>
        <begin position="423"/>
        <end position="425"/>
    </location>
</feature>
<feature type="strand" evidence="19">
    <location>
        <begin position="426"/>
        <end position="431"/>
    </location>
</feature>
<feature type="strand" evidence="19">
    <location>
        <begin position="436"/>
        <end position="440"/>
    </location>
</feature>
<feature type="turn" evidence="19">
    <location>
        <begin position="441"/>
        <end position="443"/>
    </location>
</feature>
<feature type="strand" evidence="19">
    <location>
        <begin position="446"/>
        <end position="450"/>
    </location>
</feature>
<feature type="strand" evidence="22">
    <location>
        <begin position="456"/>
        <end position="458"/>
    </location>
</feature>
<feature type="helix" evidence="23">
    <location>
        <begin position="460"/>
        <end position="462"/>
    </location>
</feature>
<feature type="strand" evidence="19">
    <location>
        <begin position="465"/>
        <end position="470"/>
    </location>
</feature>
<feature type="strand" evidence="20">
    <location>
        <begin position="472"/>
        <end position="475"/>
    </location>
</feature>
<feature type="strand" evidence="19">
    <location>
        <begin position="476"/>
        <end position="481"/>
    </location>
</feature>
<feature type="turn" evidence="21">
    <location>
        <begin position="482"/>
        <end position="484"/>
    </location>
</feature>
<feature type="strand" evidence="19">
    <location>
        <begin position="486"/>
        <end position="491"/>
    </location>
</feature>
<feature type="turn" evidence="24">
    <location>
        <begin position="497"/>
        <end position="499"/>
    </location>
</feature>
<accession>O43660</accession>
<accession>B3KMK4</accession>
<accession>Q3KQY5</accession>
<accession>Q8WUD8</accession>
<dbReference type="EMBL" id="AF044333">
    <property type="protein sequence ID" value="AAD09407.1"/>
    <property type="molecule type" value="mRNA"/>
</dbReference>
<dbReference type="EMBL" id="AK002108">
    <property type="protein sequence ID" value="BAG51016.1"/>
    <property type="molecule type" value="mRNA"/>
</dbReference>
<dbReference type="EMBL" id="CH471056">
    <property type="protein sequence ID" value="EAX04941.1"/>
    <property type="molecule type" value="Genomic_DNA"/>
</dbReference>
<dbReference type="EMBL" id="BC020786">
    <property type="protein sequence ID" value="AAH20786.1"/>
    <property type="molecule type" value="mRNA"/>
</dbReference>
<dbReference type="EMBL" id="BC106004">
    <property type="protein sequence ID" value="AAI06005.1"/>
    <property type="molecule type" value="mRNA"/>
</dbReference>
<dbReference type="CCDS" id="CCDS34083.1">
    <molecule id="O43660-1"/>
</dbReference>
<dbReference type="CCDS" id="CCDS56341.1">
    <molecule id="O43660-2"/>
</dbReference>
<dbReference type="RefSeq" id="NP_001188493.1">
    <molecule id="O43660-2"/>
    <property type="nucleotide sequence ID" value="NM_001201564.2"/>
</dbReference>
<dbReference type="RefSeq" id="NP_002660.1">
    <molecule id="O43660-1"/>
    <property type="nucleotide sequence ID" value="NM_002669.4"/>
</dbReference>
<dbReference type="PDB" id="4YVD">
    <property type="method" value="X-ray"/>
    <property type="resolution" value="1.70 A"/>
    <property type="chains" value="A=141-514"/>
</dbReference>
<dbReference type="PDB" id="5MQF">
    <property type="method" value="EM"/>
    <property type="resolution" value="5.90 A"/>
    <property type="chains" value="D=1-514"/>
</dbReference>
<dbReference type="PDB" id="5XJC">
    <property type="method" value="EM"/>
    <property type="resolution" value="3.60 A"/>
    <property type="chains" value="T=1-514"/>
</dbReference>
<dbReference type="PDB" id="5YZG">
    <property type="method" value="EM"/>
    <property type="resolution" value="4.10 A"/>
    <property type="chains" value="T=1-514"/>
</dbReference>
<dbReference type="PDB" id="5Z56">
    <property type="method" value="EM"/>
    <property type="resolution" value="5.10 A"/>
    <property type="chains" value="T=1-514"/>
</dbReference>
<dbReference type="PDB" id="5Z57">
    <property type="method" value="EM"/>
    <property type="resolution" value="6.50 A"/>
    <property type="chains" value="T=1-514"/>
</dbReference>
<dbReference type="PDB" id="5Z58">
    <property type="method" value="EM"/>
    <property type="resolution" value="4.90 A"/>
    <property type="chains" value="T=1-514"/>
</dbReference>
<dbReference type="PDB" id="6FF4">
    <property type="method" value="EM"/>
    <property type="resolution" value="16.00 A"/>
    <property type="chains" value="D=1-514"/>
</dbReference>
<dbReference type="PDB" id="6FF7">
    <property type="method" value="EM"/>
    <property type="resolution" value="4.50 A"/>
    <property type="chains" value="D=1-514"/>
</dbReference>
<dbReference type="PDB" id="6ICZ">
    <property type="method" value="EM"/>
    <property type="resolution" value="3.00 A"/>
    <property type="chains" value="T=1-514"/>
</dbReference>
<dbReference type="PDB" id="6ID0">
    <property type="method" value="EM"/>
    <property type="resolution" value="2.90 A"/>
    <property type="chains" value="T=1-514"/>
</dbReference>
<dbReference type="PDB" id="6ID1">
    <property type="method" value="EM"/>
    <property type="resolution" value="2.86 A"/>
    <property type="chains" value="T=1-514"/>
</dbReference>
<dbReference type="PDB" id="6QDV">
    <property type="method" value="EM"/>
    <property type="resolution" value="3.30 A"/>
    <property type="chains" value="J=185-504"/>
</dbReference>
<dbReference type="PDB" id="6ZYM">
    <property type="method" value="EM"/>
    <property type="resolution" value="3.40 A"/>
    <property type="chains" value="D=1-514"/>
</dbReference>
<dbReference type="PDB" id="7AAV">
    <property type="method" value="EM"/>
    <property type="resolution" value="4.20 A"/>
    <property type="chains" value="G=1-514"/>
</dbReference>
<dbReference type="PDB" id="7ABF">
    <property type="method" value="EM"/>
    <property type="resolution" value="3.90 A"/>
    <property type="chains" value="G=1-514"/>
</dbReference>
<dbReference type="PDB" id="7ABG">
    <property type="method" value="EM"/>
    <property type="resolution" value="7.80 A"/>
    <property type="chains" value="G=1-514"/>
</dbReference>
<dbReference type="PDB" id="7ABI">
    <property type="method" value="EM"/>
    <property type="resolution" value="8.00 A"/>
    <property type="chains" value="G=1-514"/>
</dbReference>
<dbReference type="PDB" id="7DH6">
    <property type="method" value="X-ray"/>
    <property type="resolution" value="2.58 A"/>
    <property type="chains" value="A/B/C/D=140-514"/>
</dbReference>
<dbReference type="PDB" id="7DVQ">
    <property type="method" value="EM"/>
    <property type="resolution" value="2.89 A"/>
    <property type="chains" value="T=1-514"/>
</dbReference>
<dbReference type="PDB" id="7QTT">
    <property type="method" value="EM"/>
    <property type="resolution" value="3.10 A"/>
    <property type="chains" value="O=1-514"/>
</dbReference>
<dbReference type="PDB" id="7W59">
    <property type="method" value="EM"/>
    <property type="resolution" value="3.60 A"/>
    <property type="chains" value="T=1-514"/>
</dbReference>
<dbReference type="PDB" id="7W5A">
    <property type="method" value="EM"/>
    <property type="resolution" value="3.60 A"/>
    <property type="chains" value="T=1-514"/>
</dbReference>
<dbReference type="PDB" id="7W5B">
    <property type="method" value="EM"/>
    <property type="resolution" value="4.30 A"/>
    <property type="chains" value="T=1-514"/>
</dbReference>
<dbReference type="PDB" id="8C6J">
    <property type="method" value="EM"/>
    <property type="resolution" value="2.80 A"/>
    <property type="chains" value="J=1-514"/>
</dbReference>
<dbReference type="PDB" id="8CH6">
    <property type="method" value="EM"/>
    <property type="resolution" value="5.90 A"/>
    <property type="chains" value="O=1-514"/>
</dbReference>
<dbReference type="PDB" id="8I0P">
    <property type="method" value="EM"/>
    <property type="resolution" value="3.40 A"/>
    <property type="chains" value="T=1-514"/>
</dbReference>
<dbReference type="PDB" id="8I0R">
    <property type="method" value="EM"/>
    <property type="resolution" value="3.00 A"/>
    <property type="chains" value="T=1-514"/>
</dbReference>
<dbReference type="PDB" id="8I0S">
    <property type="method" value="EM"/>
    <property type="resolution" value="4.20 A"/>
    <property type="chains" value="T=1-514"/>
</dbReference>
<dbReference type="PDB" id="8I0T">
    <property type="method" value="EM"/>
    <property type="resolution" value="3.00 A"/>
    <property type="chains" value="T=1-514"/>
</dbReference>
<dbReference type="PDB" id="8I0U">
    <property type="method" value="EM"/>
    <property type="resolution" value="3.30 A"/>
    <property type="chains" value="T=1-514"/>
</dbReference>
<dbReference type="PDB" id="8I0V">
    <property type="method" value="EM"/>
    <property type="resolution" value="3.00 A"/>
    <property type="chains" value="T=1-514"/>
</dbReference>
<dbReference type="PDB" id="8I0W">
    <property type="method" value="EM"/>
    <property type="resolution" value="3.40 A"/>
    <property type="chains" value="T=1-514"/>
</dbReference>
<dbReference type="PDB" id="8RO2">
    <property type="method" value="EM"/>
    <property type="resolution" value="3.50 A"/>
    <property type="chains" value="T=1-514"/>
</dbReference>
<dbReference type="PDB" id="9FMD">
    <property type="method" value="EM"/>
    <property type="resolution" value="3.30 A"/>
    <property type="chains" value="T=1-514"/>
</dbReference>
<dbReference type="PDBsum" id="4YVD"/>
<dbReference type="PDBsum" id="5MQF"/>
<dbReference type="PDBsum" id="5XJC"/>
<dbReference type="PDBsum" id="5YZG"/>
<dbReference type="PDBsum" id="5Z56"/>
<dbReference type="PDBsum" id="5Z57"/>
<dbReference type="PDBsum" id="5Z58"/>
<dbReference type="PDBsum" id="6FF4"/>
<dbReference type="PDBsum" id="6FF7"/>
<dbReference type="PDBsum" id="6ICZ"/>
<dbReference type="PDBsum" id="6ID0"/>
<dbReference type="PDBsum" id="6ID1"/>
<dbReference type="PDBsum" id="6QDV"/>
<dbReference type="PDBsum" id="6ZYM"/>
<dbReference type="PDBsum" id="7AAV"/>
<dbReference type="PDBsum" id="7ABF"/>
<dbReference type="PDBsum" id="7ABG"/>
<dbReference type="PDBsum" id="7ABI"/>
<dbReference type="PDBsum" id="7DH6"/>
<dbReference type="PDBsum" id="7DVQ"/>
<dbReference type="PDBsum" id="7QTT"/>
<dbReference type="PDBsum" id="7W59"/>
<dbReference type="PDBsum" id="7W5A"/>
<dbReference type="PDBsum" id="7W5B"/>
<dbReference type="PDBsum" id="8C6J"/>
<dbReference type="PDBsum" id="8CH6"/>
<dbReference type="PDBsum" id="8I0P"/>
<dbReference type="PDBsum" id="8I0R"/>
<dbReference type="PDBsum" id="8I0S"/>
<dbReference type="PDBsum" id="8I0T"/>
<dbReference type="PDBsum" id="8I0U"/>
<dbReference type="PDBsum" id="8I0V"/>
<dbReference type="PDBsum" id="8I0W"/>
<dbReference type="PDBsum" id="8RO2"/>
<dbReference type="PDBsum" id="9FMD"/>
<dbReference type="EMDB" id="EMD-11569"/>
<dbReference type="EMDB" id="EMD-11693"/>
<dbReference type="EMDB" id="EMD-11694"/>
<dbReference type="EMDB" id="EMD-11695"/>
<dbReference type="EMDB" id="EMD-11697"/>
<dbReference type="EMDB" id="EMD-14146"/>
<dbReference type="EMDB" id="EMD-16452"/>
<dbReference type="EMDB" id="EMD-16658"/>
<dbReference type="EMDB" id="EMD-19399"/>
<dbReference type="EMDB" id="EMD-30875"/>
<dbReference type="EMDB" id="EMD-32317"/>
<dbReference type="EMDB" id="EMD-32319"/>
<dbReference type="EMDB" id="EMD-32321"/>
<dbReference type="EMDB" id="EMD-35105"/>
<dbReference type="EMDB" id="EMD-35107"/>
<dbReference type="EMDB" id="EMD-35108"/>
<dbReference type="EMDB" id="EMD-35109"/>
<dbReference type="EMDB" id="EMD-35110"/>
<dbReference type="EMDB" id="EMD-35111"/>
<dbReference type="EMDB" id="EMD-35113"/>
<dbReference type="EMDB" id="EMD-3545"/>
<dbReference type="EMDB" id="EMD-4255"/>
<dbReference type="EMDB" id="EMD-4525"/>
<dbReference type="EMDB" id="EMD-6721"/>
<dbReference type="EMDB" id="EMD-6864"/>
<dbReference type="EMDB" id="EMD-6889"/>
<dbReference type="EMDB" id="EMD-6890"/>
<dbReference type="EMDB" id="EMD-6891"/>
<dbReference type="EMDB" id="EMD-9645"/>
<dbReference type="EMDB" id="EMD-9646"/>
<dbReference type="EMDB" id="EMD-9647"/>
<dbReference type="SMR" id="O43660"/>
<dbReference type="BioGRID" id="111370">
    <property type="interactions" value="221"/>
</dbReference>
<dbReference type="ComplexPortal" id="CPX-5824">
    <property type="entry name" value="PRP19-CDC5L complex"/>
</dbReference>
<dbReference type="CORUM" id="O43660"/>
<dbReference type="FunCoup" id="O43660">
    <property type="interactions" value="2653"/>
</dbReference>
<dbReference type="IntAct" id="O43660">
    <property type="interactions" value="101"/>
</dbReference>
<dbReference type="MINT" id="O43660"/>
<dbReference type="STRING" id="9606.ENSP00000424417"/>
<dbReference type="GlyCosmos" id="O43660">
    <property type="glycosylation" value="1 site, 1 glycan"/>
</dbReference>
<dbReference type="GlyGen" id="O43660">
    <property type="glycosylation" value="6 sites, 2 N-linked glycans (2 sites), 2 O-linked glycans (4 sites)"/>
</dbReference>
<dbReference type="iPTMnet" id="O43660"/>
<dbReference type="MetOSite" id="O43660"/>
<dbReference type="PhosphoSitePlus" id="O43660"/>
<dbReference type="SwissPalm" id="O43660"/>
<dbReference type="BioMuta" id="PLRG1"/>
<dbReference type="jPOST" id="O43660"/>
<dbReference type="MassIVE" id="O43660"/>
<dbReference type="PaxDb" id="9606-ENSP00000424417"/>
<dbReference type="PeptideAtlas" id="O43660"/>
<dbReference type="ProteomicsDB" id="49091">
    <molecule id="O43660-1"/>
</dbReference>
<dbReference type="ProteomicsDB" id="49092">
    <molecule id="O43660-2"/>
</dbReference>
<dbReference type="Pumba" id="O43660"/>
<dbReference type="Antibodypedia" id="16702">
    <property type="antibodies" value="248 antibodies from 29 providers"/>
</dbReference>
<dbReference type="DNASU" id="5356"/>
<dbReference type="Ensembl" id="ENST00000302078.9">
    <molecule id="O43660-2"/>
    <property type="protein sequence ID" value="ENSP00000303191.5"/>
    <property type="gene ID" value="ENSG00000171566.12"/>
</dbReference>
<dbReference type="Ensembl" id="ENST00000499023.7">
    <molecule id="O43660-1"/>
    <property type="protein sequence ID" value="ENSP00000424417.1"/>
    <property type="gene ID" value="ENSG00000171566.12"/>
</dbReference>
<dbReference type="GeneID" id="5356"/>
<dbReference type="KEGG" id="hsa:5356"/>
<dbReference type="MANE-Select" id="ENST00000499023.7">
    <property type="protein sequence ID" value="ENSP00000424417.1"/>
    <property type="RefSeq nucleotide sequence ID" value="NM_002669.4"/>
    <property type="RefSeq protein sequence ID" value="NP_002660.1"/>
</dbReference>
<dbReference type="UCSC" id="uc003iny.4">
    <molecule id="O43660-1"/>
    <property type="organism name" value="human"/>
</dbReference>
<dbReference type="AGR" id="HGNC:9089"/>
<dbReference type="CTD" id="5356"/>
<dbReference type="DisGeNET" id="5356"/>
<dbReference type="GeneCards" id="PLRG1"/>
<dbReference type="HGNC" id="HGNC:9089">
    <property type="gene designation" value="PLRG1"/>
</dbReference>
<dbReference type="HPA" id="ENSG00000171566">
    <property type="expression patterns" value="Low tissue specificity"/>
</dbReference>
<dbReference type="MIM" id="605961">
    <property type="type" value="gene"/>
</dbReference>
<dbReference type="neXtProt" id="NX_O43660"/>
<dbReference type="OpenTargets" id="ENSG00000171566"/>
<dbReference type="PharmGKB" id="PA33416"/>
<dbReference type="VEuPathDB" id="HostDB:ENSG00000171566"/>
<dbReference type="eggNOG" id="KOG0285">
    <property type="taxonomic scope" value="Eukaryota"/>
</dbReference>
<dbReference type="GeneTree" id="ENSGT00940000155316"/>
<dbReference type="HOGENOM" id="CLU_000288_72_2_1"/>
<dbReference type="InParanoid" id="O43660"/>
<dbReference type="OMA" id="FAMCFDQ"/>
<dbReference type="OrthoDB" id="10256122at2759"/>
<dbReference type="PAN-GO" id="O43660">
    <property type="GO annotations" value="3 GO annotations based on evolutionary models"/>
</dbReference>
<dbReference type="PhylomeDB" id="O43660"/>
<dbReference type="TreeFam" id="TF105684"/>
<dbReference type="PathwayCommons" id="O43660"/>
<dbReference type="Reactome" id="R-HSA-72163">
    <property type="pathway name" value="mRNA Splicing - Major Pathway"/>
</dbReference>
<dbReference type="SignaLink" id="O43660"/>
<dbReference type="SIGNOR" id="O43660"/>
<dbReference type="BioGRID-ORCS" id="5356">
    <property type="hits" value="744 hits in 1154 CRISPR screens"/>
</dbReference>
<dbReference type="CD-CODE" id="804901D1">
    <property type="entry name" value="Nuclear speckle"/>
</dbReference>
<dbReference type="CD-CODE" id="91857CE7">
    <property type="entry name" value="Nucleolus"/>
</dbReference>
<dbReference type="CD-CODE" id="DEE660B4">
    <property type="entry name" value="Stress granule"/>
</dbReference>
<dbReference type="ChiTaRS" id="PLRG1">
    <property type="organism name" value="human"/>
</dbReference>
<dbReference type="EvolutionaryTrace" id="O43660"/>
<dbReference type="GeneWiki" id="PLRG1"/>
<dbReference type="GenomeRNAi" id="5356"/>
<dbReference type="Pharos" id="O43660">
    <property type="development level" value="Tbio"/>
</dbReference>
<dbReference type="PRO" id="PR:O43660"/>
<dbReference type="Proteomes" id="UP000005640">
    <property type="component" value="Chromosome 4"/>
</dbReference>
<dbReference type="RNAct" id="O43660">
    <property type="molecule type" value="protein"/>
</dbReference>
<dbReference type="Bgee" id="ENSG00000171566">
    <property type="expression patterns" value="Expressed in secondary oocyte and 185 other cell types or tissues"/>
</dbReference>
<dbReference type="ExpressionAtlas" id="O43660">
    <property type="expression patterns" value="baseline and differential"/>
</dbReference>
<dbReference type="GO" id="GO:0071013">
    <property type="term" value="C:catalytic step 2 spliceosome"/>
    <property type="evidence" value="ECO:0000314"/>
    <property type="project" value="UniProtKB"/>
</dbReference>
<dbReference type="GO" id="GO:0001650">
    <property type="term" value="C:fibrillar center"/>
    <property type="evidence" value="ECO:0000314"/>
    <property type="project" value="HPA"/>
</dbReference>
<dbReference type="GO" id="GO:0031965">
    <property type="term" value="C:nuclear membrane"/>
    <property type="evidence" value="ECO:0000314"/>
    <property type="project" value="HPA"/>
</dbReference>
<dbReference type="GO" id="GO:0016607">
    <property type="term" value="C:nuclear speck"/>
    <property type="evidence" value="ECO:0000314"/>
    <property type="project" value="HPA"/>
</dbReference>
<dbReference type="GO" id="GO:0005654">
    <property type="term" value="C:nucleoplasm"/>
    <property type="evidence" value="ECO:0000314"/>
    <property type="project" value="HPA"/>
</dbReference>
<dbReference type="GO" id="GO:0005634">
    <property type="term" value="C:nucleus"/>
    <property type="evidence" value="ECO:0000314"/>
    <property type="project" value="UniProtKB"/>
</dbReference>
<dbReference type="GO" id="GO:0000974">
    <property type="term" value="C:Prp19 complex"/>
    <property type="evidence" value="ECO:0000353"/>
    <property type="project" value="ComplexPortal"/>
</dbReference>
<dbReference type="GO" id="GO:0005681">
    <property type="term" value="C:spliceosomal complex"/>
    <property type="evidence" value="ECO:0000353"/>
    <property type="project" value="ComplexPortal"/>
</dbReference>
<dbReference type="GO" id="GO:0071007">
    <property type="term" value="C:U2-type catalytic step 2 spliceosome"/>
    <property type="evidence" value="ECO:0000314"/>
    <property type="project" value="UniProtKB"/>
</dbReference>
<dbReference type="GO" id="GO:0000398">
    <property type="term" value="P:mRNA splicing, via spliceosome"/>
    <property type="evidence" value="ECO:0000314"/>
    <property type="project" value="UniProtKB"/>
</dbReference>
<dbReference type="GO" id="GO:1900087">
    <property type="term" value="P:positive regulation of G1/S transition of mitotic cell cycle"/>
    <property type="evidence" value="ECO:0007669"/>
    <property type="project" value="Ensembl"/>
</dbReference>
<dbReference type="GO" id="GO:0034504">
    <property type="term" value="P:protein localization to nucleus"/>
    <property type="evidence" value="ECO:0007669"/>
    <property type="project" value="Ensembl"/>
</dbReference>
<dbReference type="CDD" id="cd00200">
    <property type="entry name" value="WD40"/>
    <property type="match status" value="1"/>
</dbReference>
<dbReference type="FunFam" id="2.130.10.10:FF:000012">
    <property type="entry name" value="Putative pleiotropic regulator 1"/>
    <property type="match status" value="1"/>
</dbReference>
<dbReference type="Gene3D" id="2.130.10.10">
    <property type="entry name" value="YVTN repeat-like/Quinoprotein amine dehydrogenase"/>
    <property type="match status" value="1"/>
</dbReference>
<dbReference type="InterPro" id="IPR020472">
    <property type="entry name" value="G-protein_beta_WD-40_rep"/>
</dbReference>
<dbReference type="InterPro" id="IPR045241">
    <property type="entry name" value="Prp46/PLRG1-like"/>
</dbReference>
<dbReference type="InterPro" id="IPR015943">
    <property type="entry name" value="WD40/YVTN_repeat-like_dom_sf"/>
</dbReference>
<dbReference type="InterPro" id="IPR019775">
    <property type="entry name" value="WD40_repeat_CS"/>
</dbReference>
<dbReference type="InterPro" id="IPR036322">
    <property type="entry name" value="WD40_repeat_dom_sf"/>
</dbReference>
<dbReference type="InterPro" id="IPR001680">
    <property type="entry name" value="WD40_rpt"/>
</dbReference>
<dbReference type="PANTHER" id="PTHR19923:SF0">
    <property type="entry name" value="PLEIOTROPIC REGULATOR 1"/>
    <property type="match status" value="1"/>
</dbReference>
<dbReference type="PANTHER" id="PTHR19923">
    <property type="entry name" value="WD40 REPEAT PROTEINPRL1/PRL2-RELATED"/>
    <property type="match status" value="1"/>
</dbReference>
<dbReference type="Pfam" id="PF00400">
    <property type="entry name" value="WD40"/>
    <property type="match status" value="7"/>
</dbReference>
<dbReference type="PRINTS" id="PR00320">
    <property type="entry name" value="GPROTEINBRPT"/>
</dbReference>
<dbReference type="SMART" id="SM00320">
    <property type="entry name" value="WD40"/>
    <property type="match status" value="7"/>
</dbReference>
<dbReference type="SUPFAM" id="SSF50978">
    <property type="entry name" value="WD40 repeat-like"/>
    <property type="match status" value="1"/>
</dbReference>
<dbReference type="PROSITE" id="PS00678">
    <property type="entry name" value="WD_REPEATS_1"/>
    <property type="match status" value="2"/>
</dbReference>
<dbReference type="PROSITE" id="PS50082">
    <property type="entry name" value="WD_REPEATS_2"/>
    <property type="match status" value="5"/>
</dbReference>
<dbReference type="PROSITE" id="PS50294">
    <property type="entry name" value="WD_REPEATS_REGION"/>
    <property type="match status" value="1"/>
</dbReference>
<name>PLRG1_HUMAN</name>
<reference key="1">
    <citation type="journal article" date="1998" name="Genes Dev.">
        <title>Pleiotropic control of glucose and hormone responses by PRL1, a nuclear WD protein, in Arabidopsis.</title>
        <authorList>
            <person name="Nemeth K."/>
            <person name="Salchert K."/>
            <person name="Putnoky P."/>
            <person name="Bhalerao R."/>
            <person name="Koncz-Kalman Z."/>
            <person name="Stankovic-Stangeland B."/>
            <person name="Bako L."/>
            <person name="Mathur J."/>
            <person name="Oekresz L."/>
            <person name="Stabel S."/>
            <person name="Geigenberger P."/>
            <person name="Stitt M."/>
            <person name="Redei G.P."/>
            <person name="Schell J."/>
            <person name="Koncz C."/>
        </authorList>
    </citation>
    <scope>NUCLEOTIDE SEQUENCE [MRNA] (ISOFORM 1)</scope>
</reference>
<reference key="2">
    <citation type="journal article" date="2004" name="Nat. Genet.">
        <title>Complete sequencing and characterization of 21,243 full-length human cDNAs.</title>
        <authorList>
            <person name="Ota T."/>
            <person name="Suzuki Y."/>
            <person name="Nishikawa T."/>
            <person name="Otsuki T."/>
            <person name="Sugiyama T."/>
            <person name="Irie R."/>
            <person name="Wakamatsu A."/>
            <person name="Hayashi K."/>
            <person name="Sato H."/>
            <person name="Nagai K."/>
            <person name="Kimura K."/>
            <person name="Makita H."/>
            <person name="Sekine M."/>
            <person name="Obayashi M."/>
            <person name="Nishi T."/>
            <person name="Shibahara T."/>
            <person name="Tanaka T."/>
            <person name="Ishii S."/>
            <person name="Yamamoto J."/>
            <person name="Saito K."/>
            <person name="Kawai Y."/>
            <person name="Isono Y."/>
            <person name="Nakamura Y."/>
            <person name="Nagahari K."/>
            <person name="Murakami K."/>
            <person name="Yasuda T."/>
            <person name="Iwayanagi T."/>
            <person name="Wagatsuma M."/>
            <person name="Shiratori A."/>
            <person name="Sudo H."/>
            <person name="Hosoiri T."/>
            <person name="Kaku Y."/>
            <person name="Kodaira H."/>
            <person name="Kondo H."/>
            <person name="Sugawara M."/>
            <person name="Takahashi M."/>
            <person name="Kanda K."/>
            <person name="Yokoi T."/>
            <person name="Furuya T."/>
            <person name="Kikkawa E."/>
            <person name="Omura Y."/>
            <person name="Abe K."/>
            <person name="Kamihara K."/>
            <person name="Katsuta N."/>
            <person name="Sato K."/>
            <person name="Tanikawa M."/>
            <person name="Yamazaki M."/>
            <person name="Ninomiya K."/>
            <person name="Ishibashi T."/>
            <person name="Yamashita H."/>
            <person name="Murakawa K."/>
            <person name="Fujimori K."/>
            <person name="Tanai H."/>
            <person name="Kimata M."/>
            <person name="Watanabe M."/>
            <person name="Hiraoka S."/>
            <person name="Chiba Y."/>
            <person name="Ishida S."/>
            <person name="Ono Y."/>
            <person name="Takiguchi S."/>
            <person name="Watanabe S."/>
            <person name="Yosida M."/>
            <person name="Hotuta T."/>
            <person name="Kusano J."/>
            <person name="Kanehori K."/>
            <person name="Takahashi-Fujii A."/>
            <person name="Hara H."/>
            <person name="Tanase T.-O."/>
            <person name="Nomura Y."/>
            <person name="Togiya S."/>
            <person name="Komai F."/>
            <person name="Hara R."/>
            <person name="Takeuchi K."/>
            <person name="Arita M."/>
            <person name="Imose N."/>
            <person name="Musashino K."/>
            <person name="Yuuki H."/>
            <person name="Oshima A."/>
            <person name="Sasaki N."/>
            <person name="Aotsuka S."/>
            <person name="Yoshikawa Y."/>
            <person name="Matsunawa H."/>
            <person name="Ichihara T."/>
            <person name="Shiohata N."/>
            <person name="Sano S."/>
            <person name="Moriya S."/>
            <person name="Momiyama H."/>
            <person name="Satoh N."/>
            <person name="Takami S."/>
            <person name="Terashima Y."/>
            <person name="Suzuki O."/>
            <person name="Nakagawa S."/>
            <person name="Senoh A."/>
            <person name="Mizoguchi H."/>
            <person name="Goto Y."/>
            <person name="Shimizu F."/>
            <person name="Wakebe H."/>
            <person name="Hishigaki H."/>
            <person name="Watanabe T."/>
            <person name="Sugiyama A."/>
            <person name="Takemoto M."/>
            <person name="Kawakami B."/>
            <person name="Yamazaki M."/>
            <person name="Watanabe K."/>
            <person name="Kumagai A."/>
            <person name="Itakura S."/>
            <person name="Fukuzumi Y."/>
            <person name="Fujimori Y."/>
            <person name="Komiyama M."/>
            <person name="Tashiro H."/>
            <person name="Tanigami A."/>
            <person name="Fujiwara T."/>
            <person name="Ono T."/>
            <person name="Yamada K."/>
            <person name="Fujii Y."/>
            <person name="Ozaki K."/>
            <person name="Hirao M."/>
            <person name="Ohmori Y."/>
            <person name="Kawabata A."/>
            <person name="Hikiji T."/>
            <person name="Kobatake N."/>
            <person name="Inagaki H."/>
            <person name="Ikema Y."/>
            <person name="Okamoto S."/>
            <person name="Okitani R."/>
            <person name="Kawakami T."/>
            <person name="Noguchi S."/>
            <person name="Itoh T."/>
            <person name="Shigeta K."/>
            <person name="Senba T."/>
            <person name="Matsumura K."/>
            <person name="Nakajima Y."/>
            <person name="Mizuno T."/>
            <person name="Morinaga M."/>
            <person name="Sasaki M."/>
            <person name="Togashi T."/>
            <person name="Oyama M."/>
            <person name="Hata H."/>
            <person name="Watanabe M."/>
            <person name="Komatsu T."/>
            <person name="Mizushima-Sugano J."/>
            <person name="Satoh T."/>
            <person name="Shirai Y."/>
            <person name="Takahashi Y."/>
            <person name="Nakagawa K."/>
            <person name="Okumura K."/>
            <person name="Nagase T."/>
            <person name="Nomura N."/>
            <person name="Kikuchi H."/>
            <person name="Masuho Y."/>
            <person name="Yamashita R."/>
            <person name="Nakai K."/>
            <person name="Yada T."/>
            <person name="Nakamura Y."/>
            <person name="Ohara O."/>
            <person name="Isogai T."/>
            <person name="Sugano S."/>
        </authorList>
    </citation>
    <scope>NUCLEOTIDE SEQUENCE [LARGE SCALE MRNA] (ISOFORM 1)</scope>
    <source>
        <tissue>Placenta</tissue>
    </source>
</reference>
<reference key="3">
    <citation type="submission" date="2005-09" db="EMBL/GenBank/DDBJ databases">
        <authorList>
            <person name="Mural R.J."/>
            <person name="Istrail S."/>
            <person name="Sutton G.G."/>
            <person name="Florea L."/>
            <person name="Halpern A.L."/>
            <person name="Mobarry C.M."/>
            <person name="Lippert R."/>
            <person name="Walenz B."/>
            <person name="Shatkay H."/>
            <person name="Dew I."/>
            <person name="Miller J.R."/>
            <person name="Flanigan M.J."/>
            <person name="Edwards N.J."/>
            <person name="Bolanos R."/>
            <person name="Fasulo D."/>
            <person name="Halldorsson B.V."/>
            <person name="Hannenhalli S."/>
            <person name="Turner R."/>
            <person name="Yooseph S."/>
            <person name="Lu F."/>
            <person name="Nusskern D.R."/>
            <person name="Shue B.C."/>
            <person name="Zheng X.H."/>
            <person name="Zhong F."/>
            <person name="Delcher A.L."/>
            <person name="Huson D.H."/>
            <person name="Kravitz S.A."/>
            <person name="Mouchard L."/>
            <person name="Reinert K."/>
            <person name="Remington K.A."/>
            <person name="Clark A.G."/>
            <person name="Waterman M.S."/>
            <person name="Eichler E.E."/>
            <person name="Adams M.D."/>
            <person name="Hunkapiller M.W."/>
            <person name="Myers E.W."/>
            <person name="Venter J.C."/>
        </authorList>
    </citation>
    <scope>NUCLEOTIDE SEQUENCE [LARGE SCALE GENOMIC DNA]</scope>
</reference>
<reference key="4">
    <citation type="journal article" date="2004" name="Genome Res.">
        <title>The status, quality, and expansion of the NIH full-length cDNA project: the Mammalian Gene Collection (MGC).</title>
        <authorList>
            <consortium name="The MGC Project Team"/>
        </authorList>
    </citation>
    <scope>NUCLEOTIDE SEQUENCE [LARGE SCALE MRNA] (ISOFORMS 1 AND 2)</scope>
    <source>
        <tissue>Lung</tissue>
    </source>
</reference>
<reference key="5">
    <citation type="journal article" date="2000" name="EMBO J.">
        <title>Functional analysis of the human CDC5L complex and identification of its components by mass spectrometry.</title>
        <authorList>
            <person name="Ajuh P."/>
            <person name="Kuster B."/>
            <person name="Panov K."/>
            <person name="Zomerdijk J.C.B.M."/>
            <person name="Mann M."/>
            <person name="Lamond A.I."/>
        </authorList>
    </citation>
    <scope>PROTEIN SEQUENCE OF 8-41; 48-62; 69-113; 117-135; 141-180; 199-226; 238-250; 258-268; 283-308; 321-355; 377-396; 443-449 AND 488-510</scope>
    <scope>IDENTIFICATION BY MASS SPECTROMETRY</scope>
    <scope>FUNCTION</scope>
    <scope>SUBCELLULAR LOCATION</scope>
    <scope>INTERACTION WITH CDC5L AND THE SPLICEOSOME</scope>
</reference>
<reference key="6">
    <citation type="journal article" date="2001" name="J. Biol. Chem.">
        <title>A direct interaction between the carboxyl-terminal region of CDC5L and the WD40 domain of PLRG1 is essential for pre-mRNA splicing.</title>
        <authorList>
            <person name="Ajuh P."/>
            <person name="Sleeman J."/>
            <person name="Chusainow J."/>
            <person name="Lamond A.I."/>
        </authorList>
    </citation>
    <scope>FUNCTION</scope>
    <scope>SUBCELLULAR LOCATION</scope>
    <scope>INTERACTION WITH CDC5L AND THE SPLICEOSOME</scope>
</reference>
<reference key="7">
    <citation type="journal article" date="2002" name="Genome Res.">
        <title>Large-scale proteomic analysis of the human spliceosome.</title>
        <authorList>
            <person name="Rappsilber J."/>
            <person name="Ryder U."/>
            <person name="Lamond A.I."/>
            <person name="Mann M."/>
        </authorList>
    </citation>
    <scope>PROTEIN SEQUENCE OF 81-113 AND 450-476</scope>
    <scope>IDENTIFICATION BY MASS SPECTROMETRY</scope>
    <scope>INTERACTION WITH THE SPLICEOSOME</scope>
</reference>
<reference key="8">
    <citation type="journal article" date="2009" name="Anal. Chem.">
        <title>Lys-N and trypsin cover complementary parts of the phosphoproteome in a refined SCX-based approach.</title>
        <authorList>
            <person name="Gauci S."/>
            <person name="Helbig A.O."/>
            <person name="Slijper M."/>
            <person name="Krijgsveld J."/>
            <person name="Heck A.J."/>
            <person name="Mohammed S."/>
        </authorList>
    </citation>
    <scope>ACETYLATION [LARGE SCALE ANALYSIS] AT MET-1</scope>
    <scope>IDENTIFICATION BY MASS SPECTROMETRY [LARGE SCALE ANALYSIS]</scope>
</reference>
<reference key="9">
    <citation type="journal article" date="2010" name="Mol. Cell. Biol.">
        <title>Molecular architecture of the human Prp19/CDC5L complex.</title>
        <authorList>
            <person name="Grote M."/>
            <person name="Wolf E."/>
            <person name="Will C.L."/>
            <person name="Lemm I."/>
            <person name="Agafonov D.E."/>
            <person name="Schomburg A."/>
            <person name="Fischle W."/>
            <person name="Urlaub H."/>
            <person name="Luhrmann R."/>
        </authorList>
    </citation>
    <scope>IDENTIFICATION AS A COMPONENT OF THE PRP19-CDC5L SPLICING COMPLEX</scope>
    <scope>IDENTIFICATION BY MASS SPECTROMETRY</scope>
    <scope>SUBCELLULAR LOCATION</scope>
    <scope>INTERACTION WITH CDC5L; PRPF19 AND BCAS2</scope>
</reference>
<reference key="10">
    <citation type="journal article" date="2012" name="Cell Rep.">
        <title>Mpn1, mutated in poikiloderma with neutropenia protein 1, is a conserved 3'-to-5' RNA exonuclease processing U6 small nuclear RNA.</title>
        <authorList>
            <person name="Shchepachev V."/>
            <person name="Wischnewski H."/>
            <person name="Missiaglia E."/>
            <person name="Soneson C."/>
            <person name="Azzalin C.M."/>
        </authorList>
    </citation>
    <scope>INTERACTION WITH USB1</scope>
</reference>
<reference key="11">
    <citation type="journal article" date="2013" name="J. Proteome Res.">
        <title>Toward a comprehensive characterization of a human cancer cell phosphoproteome.</title>
        <authorList>
            <person name="Zhou H."/>
            <person name="Di Palma S."/>
            <person name="Preisinger C."/>
            <person name="Peng M."/>
            <person name="Polat A.N."/>
            <person name="Heck A.J."/>
            <person name="Mohammed S."/>
        </authorList>
    </citation>
    <scope>PHOSPHORYLATION [LARGE SCALE ANALYSIS] AT SER-119; SER-201 AND SER-391</scope>
    <scope>IDENTIFICATION BY MASS SPECTROMETRY [LARGE SCALE ANALYSIS]</scope>
    <source>
        <tissue>Cervix carcinoma</tissue>
        <tissue>Erythroleukemia</tissue>
    </source>
</reference>
<reference evidence="13" key="12">
    <citation type="submission" date="2015-03" db="PDB data bank">
        <title>Crystal structure of human Pleiotropic Regulator 1 (PRL1).</title>
        <authorList>
            <person name="Zeng H."/>
            <person name="Dong A."/>
            <person name="Xu C."/>
            <person name="Tempel W."/>
            <person name="Li Y."/>
            <person name="He H."/>
            <person name="Bountra C."/>
            <person name="Arrowsmith C.H."/>
            <person name="Edwards A.M."/>
            <person name="Brown P.J."/>
            <person name="Min J."/>
            <person name="Wu H."/>
        </authorList>
    </citation>
    <scope>X-RAY CRYSTALLOGRAPHY (1.70 ANGSTROMS) OF 141-514</scope>
</reference>
<reference evidence="15" key="13">
    <citation type="journal article" date="2017" name="Cell">
        <title>An Atomic Structure of the Human Spliceosome.</title>
        <authorList>
            <person name="Zhang X."/>
            <person name="Yan C."/>
            <person name="Hang J."/>
            <person name="Finci L.I."/>
            <person name="Lei J."/>
            <person name="Shi Y."/>
        </authorList>
    </citation>
    <scope>STRUCTURE BY ELECTRON MICROSCOPY (3.60 ANGSTROMS)</scope>
    <scope>FUNCTION</scope>
    <scope>SUBUNIT</scope>
    <scope>SUBCELLULAR LOCATION</scope>
</reference>
<reference evidence="14" key="14">
    <citation type="journal article" date="2017" name="Nature">
        <title>Cryo-EM structure of a human spliceosome activated for step 2 of splicing.</title>
        <authorList>
            <person name="Bertram K."/>
            <person name="Agafonov D.E."/>
            <person name="Liu W.T."/>
            <person name="Dybkov O."/>
            <person name="Will C.L."/>
            <person name="Hartmuth K."/>
            <person name="Urlaub H."/>
            <person name="Kastner B."/>
            <person name="Stark H."/>
            <person name="Luhrmann R."/>
        </authorList>
    </citation>
    <scope>STRUCTURE BY ELECTRON MICROSCOPY (5.90 ANGSTROMS)</scope>
    <scope>FUNCTION</scope>
    <scope>SUBUNIT</scope>
    <scope>SUBCELLULAR LOCATION</scope>
    <scope>IDENTIFICATION BY MASS SPECTROMETRY</scope>
</reference>
<reference evidence="16" key="15">
    <citation type="journal article" date="2021" name="Science">
        <title>Structure of the activated human minor spliceosome.</title>
        <authorList>
            <person name="Bai R."/>
            <person name="Wan R."/>
            <person name="Wang L."/>
            <person name="Xu K."/>
            <person name="Zhang Q."/>
            <person name="Lei J."/>
            <person name="Shi Y."/>
        </authorList>
    </citation>
    <scope>STRUCTURE BY ELECTRON MICROSCOPY (2.89 ANGSTROMS)</scope>
    <scope>FUNCTION</scope>
    <scope>SUBUNIT</scope>
</reference>
<organism>
    <name type="scientific">Homo sapiens</name>
    <name type="common">Human</name>
    <dbReference type="NCBI Taxonomy" id="9606"/>
    <lineage>
        <taxon>Eukaryota</taxon>
        <taxon>Metazoa</taxon>
        <taxon>Chordata</taxon>
        <taxon>Craniata</taxon>
        <taxon>Vertebrata</taxon>
        <taxon>Euteleostomi</taxon>
        <taxon>Mammalia</taxon>
        <taxon>Eutheria</taxon>
        <taxon>Euarchontoglires</taxon>
        <taxon>Primates</taxon>
        <taxon>Haplorrhini</taxon>
        <taxon>Catarrhini</taxon>
        <taxon>Hominidae</taxon>
        <taxon>Homo</taxon>
    </lineage>
</organism>